<organism>
    <name type="scientific">Orgyia pseudotsugata multicapsid polyhedrosis virus</name>
    <name type="common">OpMNPV</name>
    <dbReference type="NCBI Taxonomy" id="262177"/>
    <lineage>
        <taxon>Viruses</taxon>
        <taxon>Viruses incertae sedis</taxon>
        <taxon>Naldaviricetes</taxon>
        <taxon>Lefavirales</taxon>
        <taxon>Baculoviridae</taxon>
        <taxon>Alphabaculovirus</taxon>
        <taxon>Alphabaculovirus orpseudotsugatae</taxon>
    </lineage>
</organism>
<proteinExistence type="predicted"/>
<dbReference type="EMBL" id="U75930">
    <property type="protein sequence ID" value="AAC59121.1"/>
    <property type="molecule type" value="Genomic_DNA"/>
</dbReference>
<dbReference type="RefSeq" id="NP_046278.1">
    <property type="nucleotide sequence ID" value="NC_001875.2"/>
</dbReference>
<dbReference type="KEGG" id="vg:911970"/>
<dbReference type="OrthoDB" id="11490at10239"/>
<dbReference type="Proteomes" id="UP000009248">
    <property type="component" value="Genome"/>
</dbReference>
<keyword id="KW-1185">Reference proteome</keyword>
<organismHost>
    <name type="scientific">Orgyia pseudotsugata</name>
    <name type="common">Douglas-fir tussock moth</name>
    <dbReference type="NCBI Taxonomy" id="33414"/>
</organismHost>
<name>Y124_NPVOP</name>
<gene>
    <name type="ORF">ORF122</name>
</gene>
<reference key="1">
    <citation type="journal article" date="1997" name="Virology">
        <title>The sequence of the Orgyia pseudotsugata multinucleocapsid nuclear polyhedrosis virus genome.</title>
        <authorList>
            <person name="Ahrens C.H."/>
            <person name="Russell R.R."/>
            <person name="Funk C.J."/>
            <person name="Evans J."/>
            <person name="Harwood S."/>
            <person name="Rohrmann G.F."/>
        </authorList>
    </citation>
    <scope>NUCLEOTIDE SEQUENCE [LARGE SCALE GENOMIC DNA]</scope>
</reference>
<sequence>MNVFKRCSGYIRLSNETRARFPFAAMSYVNVTLCAFGAVVAGYLSAANTFVELQFLQYWLMLSLFVTGLINATLFLRQGKTEAHEIVYELKMLHAMYFANALVNHGLLATERSAVSAVLVANLVHCCALVLLFVELTVLLGHALGTYSDYRYAKACYMLALFVSAAVAVITVGASGMKSAPLCDNLLVAVVLSIAYLLVAIVWAARKEAAGPNLQRVQVVPFNDPPPSFASVEMDLLNAKILK</sequence>
<accession>O10361</accession>
<protein>
    <recommendedName>
        <fullName>Uncharacterized 26.5 kDa protein</fullName>
    </recommendedName>
</protein>
<feature type="chain" id="PRO_0000133063" description="Uncharacterized 26.5 kDa protein">
    <location>
        <begin position="1"/>
        <end position="243"/>
    </location>
</feature>